<comment type="function">
    <text evidence="1">Aspartyl-tRNA synthetase with relaxed tRNA specificity since it is able to aspartylate not only its cognate tRNA(Asp) but also tRNA(Asn). Reaction proceeds in two steps: L-aspartate is first activated by ATP to form Asp-AMP and then transferred to the acceptor end of tRNA(Asp/Asn).</text>
</comment>
<comment type="catalytic activity">
    <reaction evidence="1">
        <text>tRNA(Asx) + L-aspartate + ATP = L-aspartyl-tRNA(Asx) + AMP + diphosphate</text>
        <dbReference type="Rhea" id="RHEA:18349"/>
        <dbReference type="Rhea" id="RHEA-COMP:9710"/>
        <dbReference type="Rhea" id="RHEA-COMP:9711"/>
        <dbReference type="ChEBI" id="CHEBI:29991"/>
        <dbReference type="ChEBI" id="CHEBI:30616"/>
        <dbReference type="ChEBI" id="CHEBI:33019"/>
        <dbReference type="ChEBI" id="CHEBI:78442"/>
        <dbReference type="ChEBI" id="CHEBI:78516"/>
        <dbReference type="ChEBI" id="CHEBI:456215"/>
        <dbReference type="EC" id="6.1.1.23"/>
    </reaction>
</comment>
<comment type="subunit">
    <text evidence="1">Homodimer.</text>
</comment>
<comment type="subcellular location">
    <subcellularLocation>
        <location evidence="1">Cytoplasm</location>
    </subcellularLocation>
</comment>
<comment type="similarity">
    <text evidence="1">Belongs to the class-II aminoacyl-tRNA synthetase family. Type 1 subfamily.</text>
</comment>
<organism>
    <name type="scientific">Acidovorax sp. (strain JS42)</name>
    <dbReference type="NCBI Taxonomy" id="232721"/>
    <lineage>
        <taxon>Bacteria</taxon>
        <taxon>Pseudomonadati</taxon>
        <taxon>Pseudomonadota</taxon>
        <taxon>Betaproteobacteria</taxon>
        <taxon>Burkholderiales</taxon>
        <taxon>Comamonadaceae</taxon>
        <taxon>Acidovorax</taxon>
    </lineage>
</organism>
<gene>
    <name evidence="1" type="primary">aspS</name>
    <name type="ordered locus">Ajs_0874</name>
</gene>
<keyword id="KW-0030">Aminoacyl-tRNA synthetase</keyword>
<keyword id="KW-0067">ATP-binding</keyword>
<keyword id="KW-0963">Cytoplasm</keyword>
<keyword id="KW-0436">Ligase</keyword>
<keyword id="KW-0547">Nucleotide-binding</keyword>
<keyword id="KW-0648">Protein biosynthesis</keyword>
<sequence length="603" mass="68112">MAMRSHYCGLVTEALLGQTVTLSGWVNRRRDHGGVIFIDLRDREGYVQVVCDPDRPEMFKVAEDVRNEFCVQVKGLVRARPEGTTNDSLKSGKIEVLCQELNVLNPSVTPPFQMDDDNLSETTRLTHRVMDLRRPYMQRNMMLRYKTAIQVRNFLDKEGFIDIETPMLGKSTPEGARDYLVPSRVHDGQFFALPQSPQLYKQMLMVAGYDRYYQITKCFRDEDLRADRQPEFTQIDCETSFLNEEEIRAIFQRMIKEVFQQQLGVDLGEFPTMTYQEAAHRFGSDKPDLRVKLEFTELTDVMKDVDFKVFSGAANMKGGRVVALRVPGGAREEGGLSRGEIDGYTEFVKIYGAKGLAYIKVNDKAKGRDGLQSPIVKNIHDAALAEVLQRTGAQDGDLLFFGADKEKIVNDAIGALRLKVGHSEFGKKNGLFENRWAPLWVVDFPMFEHDEEEDRWVAVHHPFTSPKDGHENLMDTDPGKCIAKAYDMVLNGWELGGGSVRIHRADVQAKVFAALNIGPEDQRAKFGYLLDALQYGAPPHGGLAFGLDRLITLMTGAESIRDVIAFPKTQRAQDLLTQAPSPVDEKQLRELHIRLRNPLPAAH</sequence>
<accession>A1W4E1</accession>
<proteinExistence type="inferred from homology"/>
<name>SYDND_ACISJ</name>
<reference key="1">
    <citation type="submission" date="2006-12" db="EMBL/GenBank/DDBJ databases">
        <title>Complete sequence of chromosome 1 of Acidovorax sp. JS42.</title>
        <authorList>
            <person name="Copeland A."/>
            <person name="Lucas S."/>
            <person name="Lapidus A."/>
            <person name="Barry K."/>
            <person name="Detter J.C."/>
            <person name="Glavina del Rio T."/>
            <person name="Dalin E."/>
            <person name="Tice H."/>
            <person name="Pitluck S."/>
            <person name="Chertkov O."/>
            <person name="Brettin T."/>
            <person name="Bruce D."/>
            <person name="Han C."/>
            <person name="Tapia R."/>
            <person name="Gilna P."/>
            <person name="Schmutz J."/>
            <person name="Larimer F."/>
            <person name="Land M."/>
            <person name="Hauser L."/>
            <person name="Kyrpides N."/>
            <person name="Kim E."/>
            <person name="Stahl D."/>
            <person name="Richardson P."/>
        </authorList>
    </citation>
    <scope>NUCLEOTIDE SEQUENCE [LARGE SCALE GENOMIC DNA]</scope>
    <source>
        <strain>JS42</strain>
    </source>
</reference>
<dbReference type="EC" id="6.1.1.23" evidence="1"/>
<dbReference type="EMBL" id="CP000539">
    <property type="protein sequence ID" value="ABM41116.1"/>
    <property type="molecule type" value="Genomic_DNA"/>
</dbReference>
<dbReference type="SMR" id="A1W4E1"/>
<dbReference type="STRING" id="232721.Ajs_0874"/>
<dbReference type="KEGG" id="ajs:Ajs_0874"/>
<dbReference type="eggNOG" id="COG0173">
    <property type="taxonomic scope" value="Bacteria"/>
</dbReference>
<dbReference type="HOGENOM" id="CLU_014330_3_2_4"/>
<dbReference type="Proteomes" id="UP000000645">
    <property type="component" value="Chromosome"/>
</dbReference>
<dbReference type="GO" id="GO:0005737">
    <property type="term" value="C:cytoplasm"/>
    <property type="evidence" value="ECO:0007669"/>
    <property type="project" value="UniProtKB-SubCell"/>
</dbReference>
<dbReference type="GO" id="GO:0004815">
    <property type="term" value="F:aspartate-tRNA ligase activity"/>
    <property type="evidence" value="ECO:0007669"/>
    <property type="project" value="UniProtKB-UniRule"/>
</dbReference>
<dbReference type="GO" id="GO:0050560">
    <property type="term" value="F:aspartate-tRNA(Asn) ligase activity"/>
    <property type="evidence" value="ECO:0007669"/>
    <property type="project" value="UniProtKB-EC"/>
</dbReference>
<dbReference type="GO" id="GO:0005524">
    <property type="term" value="F:ATP binding"/>
    <property type="evidence" value="ECO:0007669"/>
    <property type="project" value="UniProtKB-UniRule"/>
</dbReference>
<dbReference type="GO" id="GO:0003676">
    <property type="term" value="F:nucleic acid binding"/>
    <property type="evidence" value="ECO:0007669"/>
    <property type="project" value="InterPro"/>
</dbReference>
<dbReference type="GO" id="GO:0006422">
    <property type="term" value="P:aspartyl-tRNA aminoacylation"/>
    <property type="evidence" value="ECO:0007669"/>
    <property type="project" value="UniProtKB-UniRule"/>
</dbReference>
<dbReference type="CDD" id="cd00777">
    <property type="entry name" value="AspRS_core"/>
    <property type="match status" value="1"/>
</dbReference>
<dbReference type="CDD" id="cd04317">
    <property type="entry name" value="EcAspRS_like_N"/>
    <property type="match status" value="1"/>
</dbReference>
<dbReference type="Gene3D" id="3.30.930.10">
    <property type="entry name" value="Bira Bifunctional Protein, Domain 2"/>
    <property type="match status" value="1"/>
</dbReference>
<dbReference type="Gene3D" id="3.30.1360.30">
    <property type="entry name" value="GAD-like domain"/>
    <property type="match status" value="1"/>
</dbReference>
<dbReference type="Gene3D" id="2.40.50.140">
    <property type="entry name" value="Nucleic acid-binding proteins"/>
    <property type="match status" value="1"/>
</dbReference>
<dbReference type="HAMAP" id="MF_00044">
    <property type="entry name" value="Asp_tRNA_synth_type1"/>
    <property type="match status" value="1"/>
</dbReference>
<dbReference type="InterPro" id="IPR004364">
    <property type="entry name" value="Aa-tRNA-synt_II"/>
</dbReference>
<dbReference type="InterPro" id="IPR006195">
    <property type="entry name" value="aa-tRNA-synth_II"/>
</dbReference>
<dbReference type="InterPro" id="IPR045864">
    <property type="entry name" value="aa-tRNA-synth_II/BPL/LPL"/>
</dbReference>
<dbReference type="InterPro" id="IPR004524">
    <property type="entry name" value="Asp-tRNA-ligase_1"/>
</dbReference>
<dbReference type="InterPro" id="IPR047089">
    <property type="entry name" value="Asp-tRNA-ligase_1_N"/>
</dbReference>
<dbReference type="InterPro" id="IPR002312">
    <property type="entry name" value="Asp/Asn-tRNA-synth_IIb"/>
</dbReference>
<dbReference type="InterPro" id="IPR047090">
    <property type="entry name" value="AspRS_core"/>
</dbReference>
<dbReference type="InterPro" id="IPR004115">
    <property type="entry name" value="GAD-like_sf"/>
</dbReference>
<dbReference type="InterPro" id="IPR029351">
    <property type="entry name" value="GAD_dom"/>
</dbReference>
<dbReference type="InterPro" id="IPR012340">
    <property type="entry name" value="NA-bd_OB-fold"/>
</dbReference>
<dbReference type="InterPro" id="IPR004365">
    <property type="entry name" value="NA-bd_OB_tRNA"/>
</dbReference>
<dbReference type="NCBIfam" id="TIGR00459">
    <property type="entry name" value="aspS_bact"/>
    <property type="match status" value="1"/>
</dbReference>
<dbReference type="NCBIfam" id="NF001750">
    <property type="entry name" value="PRK00476.1"/>
    <property type="match status" value="1"/>
</dbReference>
<dbReference type="PANTHER" id="PTHR22594:SF5">
    <property type="entry name" value="ASPARTATE--TRNA LIGASE, MITOCHONDRIAL"/>
    <property type="match status" value="1"/>
</dbReference>
<dbReference type="PANTHER" id="PTHR22594">
    <property type="entry name" value="ASPARTYL/LYSYL-TRNA SYNTHETASE"/>
    <property type="match status" value="1"/>
</dbReference>
<dbReference type="Pfam" id="PF02938">
    <property type="entry name" value="GAD"/>
    <property type="match status" value="1"/>
</dbReference>
<dbReference type="Pfam" id="PF00152">
    <property type="entry name" value="tRNA-synt_2"/>
    <property type="match status" value="1"/>
</dbReference>
<dbReference type="Pfam" id="PF01336">
    <property type="entry name" value="tRNA_anti-codon"/>
    <property type="match status" value="1"/>
</dbReference>
<dbReference type="PRINTS" id="PR01042">
    <property type="entry name" value="TRNASYNTHASP"/>
</dbReference>
<dbReference type="SUPFAM" id="SSF55681">
    <property type="entry name" value="Class II aaRS and biotin synthetases"/>
    <property type="match status" value="1"/>
</dbReference>
<dbReference type="SUPFAM" id="SSF55261">
    <property type="entry name" value="GAD domain-like"/>
    <property type="match status" value="1"/>
</dbReference>
<dbReference type="SUPFAM" id="SSF50249">
    <property type="entry name" value="Nucleic acid-binding proteins"/>
    <property type="match status" value="1"/>
</dbReference>
<dbReference type="PROSITE" id="PS50862">
    <property type="entry name" value="AA_TRNA_LIGASE_II"/>
    <property type="match status" value="1"/>
</dbReference>
<evidence type="ECO:0000255" key="1">
    <source>
        <dbReference type="HAMAP-Rule" id="MF_00044"/>
    </source>
</evidence>
<protein>
    <recommendedName>
        <fullName evidence="1">Aspartate--tRNA(Asp/Asn) ligase</fullName>
        <ecNumber evidence="1">6.1.1.23</ecNumber>
    </recommendedName>
    <alternativeName>
        <fullName evidence="1">Aspartyl-tRNA synthetase</fullName>
        <shortName evidence="1">AspRS</shortName>
    </alternativeName>
    <alternativeName>
        <fullName evidence="1">Non-discriminating aspartyl-tRNA synthetase</fullName>
        <shortName evidence="1">ND-AspRS</shortName>
    </alternativeName>
</protein>
<feature type="chain" id="PRO_1000006627" description="Aspartate--tRNA(Asp/Asn) ligase">
    <location>
        <begin position="1"/>
        <end position="603"/>
    </location>
</feature>
<feature type="region of interest" description="Aspartate" evidence="1">
    <location>
        <begin position="198"/>
        <end position="201"/>
    </location>
</feature>
<feature type="binding site" evidence="1">
    <location>
        <position position="174"/>
    </location>
    <ligand>
        <name>L-aspartate</name>
        <dbReference type="ChEBI" id="CHEBI:29991"/>
    </ligand>
</feature>
<feature type="binding site" evidence="1">
    <location>
        <begin position="220"/>
        <end position="222"/>
    </location>
    <ligand>
        <name>ATP</name>
        <dbReference type="ChEBI" id="CHEBI:30616"/>
    </ligand>
</feature>
<feature type="binding site" evidence="1">
    <location>
        <position position="220"/>
    </location>
    <ligand>
        <name>L-aspartate</name>
        <dbReference type="ChEBI" id="CHEBI:29991"/>
    </ligand>
</feature>
<feature type="binding site" evidence="1">
    <location>
        <position position="229"/>
    </location>
    <ligand>
        <name>ATP</name>
        <dbReference type="ChEBI" id="CHEBI:30616"/>
    </ligand>
</feature>
<feature type="binding site" evidence="1">
    <location>
        <position position="460"/>
    </location>
    <ligand>
        <name>L-aspartate</name>
        <dbReference type="ChEBI" id="CHEBI:29991"/>
    </ligand>
</feature>
<feature type="binding site" evidence="1">
    <location>
        <position position="494"/>
    </location>
    <ligand>
        <name>ATP</name>
        <dbReference type="ChEBI" id="CHEBI:30616"/>
    </ligand>
</feature>
<feature type="binding site" evidence="1">
    <location>
        <position position="501"/>
    </location>
    <ligand>
        <name>L-aspartate</name>
        <dbReference type="ChEBI" id="CHEBI:29991"/>
    </ligand>
</feature>
<feature type="binding site" evidence="1">
    <location>
        <begin position="546"/>
        <end position="549"/>
    </location>
    <ligand>
        <name>ATP</name>
        <dbReference type="ChEBI" id="CHEBI:30616"/>
    </ligand>
</feature>
<feature type="site" description="Important for tRNA non-discrimination" evidence="1">
    <location>
        <position position="32"/>
    </location>
</feature>
<feature type="site" description="Important for tRNA non-discrimination" evidence="1">
    <location>
        <position position="83"/>
    </location>
</feature>